<sequence length="68" mass="7386">MFTVFLLVVLATTVVSFTSDRASDDRNTNDKASRLLSHVVRGCCGSYPNAACHPCSCKDRPSYCGQGR</sequence>
<name>CA4A_CONPU</name>
<comment type="function">
    <text evidence="2">Alpha-conotoxins act on postsynaptic membranes, they bind to the nicotinic acetylcholine receptors (nAChR) and thus inhibit them. This toxin has higher affinity for the adult subtype (alpha-1-beta-1-gamma-delta (CHRNA1-CHRNB1-CHRNG-CHRND) subunits) (IC(50)=2.3 nM) of the receptor than for the fetal subtype (alpha-1-beta-1-epsilon-delta (CHRNA1-CHRNB1-CHRND-CHRNE) subunits) (IC(50)=22 nM).</text>
</comment>
<comment type="subcellular location">
    <subcellularLocation>
        <location evidence="3">Secreted</location>
    </subcellularLocation>
</comment>
<comment type="tissue specificity">
    <text evidence="7">Expressed by the venom duct.</text>
</comment>
<comment type="domain">
    <text evidence="6">The cysteine framework is IV (CC-C-C-C-C).</text>
</comment>
<comment type="similarity">
    <text evidence="6">Belongs to the conotoxin A superfamily.</text>
</comment>
<organism>
    <name type="scientific">Conus purpurascens</name>
    <name type="common">Purple cone</name>
    <dbReference type="NCBI Taxonomy" id="41690"/>
    <lineage>
        <taxon>Eukaryota</taxon>
        <taxon>Metazoa</taxon>
        <taxon>Spiralia</taxon>
        <taxon>Lophotrochozoa</taxon>
        <taxon>Mollusca</taxon>
        <taxon>Gastropoda</taxon>
        <taxon>Caenogastropoda</taxon>
        <taxon>Neogastropoda</taxon>
        <taxon>Conoidea</taxon>
        <taxon>Conidae</taxon>
        <taxon>Conus</taxon>
        <taxon>Chelyconus</taxon>
    </lineage>
</organism>
<feature type="signal peptide" evidence="1">
    <location>
        <begin position="1"/>
        <end position="16"/>
    </location>
</feature>
<feature type="propeptide" id="PRO_0000444204" evidence="3">
    <location>
        <begin position="17"/>
        <end position="41"/>
    </location>
</feature>
<feature type="peptide" id="PRO_0000044466" description="Alpha-conotoxin PIVA" evidence="3">
    <location>
        <begin position="42"/>
        <end position="66"/>
    </location>
</feature>
<feature type="modified residue" description="4-hydroxyproline; partial" evidence="3">
    <location>
        <position position="48"/>
    </location>
</feature>
<feature type="modified residue" description="4-hydroxyproline; partial" evidence="3">
    <location>
        <position position="54"/>
    </location>
</feature>
<feature type="modified residue" description="4-hydroxyproline" evidence="3">
    <location>
        <position position="61"/>
    </location>
</feature>
<feature type="modified residue" description="Glutamine amide" evidence="3">
    <location>
        <position position="66"/>
    </location>
</feature>
<feature type="disulfide bond" evidence="3 4">
    <location>
        <begin position="43"/>
        <end position="57"/>
    </location>
</feature>
<feature type="disulfide bond" evidence="3 4">
    <location>
        <begin position="44"/>
        <end position="52"/>
    </location>
</feature>
<feature type="disulfide bond" evidence="3 4">
    <location>
        <begin position="55"/>
        <end position="64"/>
    </location>
</feature>
<feature type="turn" evidence="8">
    <location>
        <begin position="54"/>
        <end position="56"/>
    </location>
</feature>
<feature type="helix" evidence="8">
    <location>
        <begin position="62"/>
        <end position="64"/>
    </location>
</feature>
<keyword id="KW-0002">3D-structure</keyword>
<keyword id="KW-0008">Acetylcholine receptor inhibiting toxin</keyword>
<keyword id="KW-0027">Amidation</keyword>
<keyword id="KW-0903">Direct protein sequencing</keyword>
<keyword id="KW-1015">Disulfide bond</keyword>
<keyword id="KW-0379">Hydroxylation</keyword>
<keyword id="KW-0872">Ion channel impairing toxin</keyword>
<keyword id="KW-0528">Neurotoxin</keyword>
<keyword id="KW-0629">Postsynaptic neurotoxin</keyword>
<keyword id="KW-0964">Secreted</keyword>
<keyword id="KW-0732">Signal</keyword>
<keyword id="KW-0800">Toxin</keyword>
<dbReference type="EMBL" id="GQ981399">
    <property type="protein sequence ID" value="ADN79118.1"/>
    <property type="molecule type" value="mRNA"/>
</dbReference>
<dbReference type="PIR" id="A58647">
    <property type="entry name" value="A58647"/>
</dbReference>
<dbReference type="PDB" id="1P1P">
    <property type="method" value="NMR"/>
    <property type="chains" value="A=42-66"/>
</dbReference>
<dbReference type="PDBsum" id="1P1P"/>
<dbReference type="SMR" id="P55963"/>
<dbReference type="TCDB" id="8.B.32.1.10">
    <property type="family name" value="the nicotinic acetylcholine receptor-targeting alpha-conotoxin (a-conotoxin) family"/>
</dbReference>
<dbReference type="ConoServer" id="1449">
    <property type="toxin name" value="PIVA"/>
</dbReference>
<dbReference type="ConoServer" id="1612">
    <property type="toxin name" value="PIVA [Hyp7P,Hyp13P]"/>
</dbReference>
<dbReference type="EvolutionaryTrace" id="P55963"/>
<dbReference type="GO" id="GO:0005576">
    <property type="term" value="C:extracellular region"/>
    <property type="evidence" value="ECO:0007669"/>
    <property type="project" value="UniProtKB-SubCell"/>
</dbReference>
<dbReference type="GO" id="GO:0035792">
    <property type="term" value="C:host cell postsynaptic membrane"/>
    <property type="evidence" value="ECO:0007669"/>
    <property type="project" value="UniProtKB-KW"/>
</dbReference>
<dbReference type="GO" id="GO:0030550">
    <property type="term" value="F:acetylcholine receptor inhibitor activity"/>
    <property type="evidence" value="ECO:0007669"/>
    <property type="project" value="UniProtKB-KW"/>
</dbReference>
<dbReference type="GO" id="GO:0099106">
    <property type="term" value="F:ion channel regulator activity"/>
    <property type="evidence" value="ECO:0007669"/>
    <property type="project" value="UniProtKB-KW"/>
</dbReference>
<dbReference type="GO" id="GO:0090729">
    <property type="term" value="F:toxin activity"/>
    <property type="evidence" value="ECO:0007669"/>
    <property type="project" value="UniProtKB-KW"/>
</dbReference>
<dbReference type="InterPro" id="IPR009958">
    <property type="entry name" value="Conotoxin_a-typ"/>
</dbReference>
<dbReference type="InterPro" id="IPR012498">
    <property type="entry name" value="Toxin_14"/>
</dbReference>
<dbReference type="Pfam" id="PF07829">
    <property type="entry name" value="Toxin_14"/>
    <property type="match status" value="1"/>
</dbReference>
<dbReference type="Pfam" id="PF07365">
    <property type="entry name" value="Toxin_8"/>
    <property type="match status" value="1"/>
</dbReference>
<proteinExistence type="evidence at protein level"/>
<accession>P55963</accession>
<accession>E2DEK7</accession>
<evidence type="ECO:0000255" key="1"/>
<evidence type="ECO:0000269" key="2">
    <source>
    </source>
</evidence>
<evidence type="ECO:0000269" key="3">
    <source>
    </source>
</evidence>
<evidence type="ECO:0000269" key="4">
    <source>
    </source>
</evidence>
<evidence type="ECO:0000303" key="5">
    <source>
    </source>
</evidence>
<evidence type="ECO:0000305" key="6"/>
<evidence type="ECO:0000305" key="7">
    <source>
    </source>
</evidence>
<evidence type="ECO:0007829" key="8">
    <source>
        <dbReference type="PDB" id="1P1P"/>
    </source>
</evidence>
<protein>
    <recommendedName>
        <fullName evidence="6">Alpha-conotoxin PIVA</fullName>
    </recommendedName>
    <alternativeName>
        <fullName evidence="5">Alpha-A-conotoxin PIVA</fullName>
    </alternativeName>
</protein>
<reference key="1">
    <citation type="submission" date="2009-09" db="EMBL/GenBank/DDBJ databases">
        <title>Superfamily, scaffold and functions: review and phylogenetic classification of conotoxins.</title>
        <authorList>
            <person name="Puillandre N."/>
            <person name="Olivera B.M."/>
        </authorList>
    </citation>
    <scope>NUCLEOTIDE SEQUENCE [MRNA]</scope>
</reference>
<reference key="2">
    <citation type="journal article" date="1995" name="J. Biol. Chem.">
        <title>A new family of Conus peptides targeted to the nicotinic acetylcholine receptor.</title>
        <authorList>
            <person name="Hopkins C."/>
            <person name="Grilley M."/>
            <person name="Miller C."/>
            <person name="Shon K.-J."/>
            <person name="Cruz L.J."/>
            <person name="Gray W.R."/>
            <person name="Dykert J."/>
            <person name="Rivier J.E."/>
            <person name="Yoshikami D."/>
            <person name="Olivera B.M."/>
        </authorList>
    </citation>
    <scope>PROTEIN SEQUENCE OF 42-66</scope>
    <scope>HYDROXYLATION AT PRO-48; PRO-54 AND PRO-61</scope>
    <scope>AMIDATION AT GLN-66</scope>
    <scope>SUBCELLULAR LOCATION</scope>
    <source>
        <tissue>Venom</tissue>
    </source>
</reference>
<reference key="3">
    <citation type="journal article" date="2006" name="Biochemistry">
        <title>Definition and characterization of the short alphaA-conotoxins: a single residue determines dissociation kinetics from the fetal muscle nicotinic acetylcholine receptor.</title>
        <authorList>
            <person name="Teichert R.W."/>
            <person name="Lopez-Vera E."/>
            <person name="Gulyas J."/>
            <person name="Watkins M."/>
            <person name="Rivier J."/>
            <person name="Olivera B.M."/>
        </authorList>
    </citation>
    <scope>SYNTHESIS OF 42-66</scope>
    <scope>FUNCTION</scope>
</reference>
<reference key="4">
    <citation type="journal article" date="1997" name="Biochemistry">
        <title>NMR structure determination of a novel conotoxin, [Pro 7,13] alpha A-conotoxin PIVA.</title>
        <authorList>
            <person name="Han K.-H."/>
            <person name="Hwang K.-J."/>
            <person name="Kim S.-M."/>
            <person name="Kim S.-K."/>
            <person name="Gray W.R."/>
            <person name="Olivera B.M."/>
            <person name="Rivier J.E."/>
            <person name="Shon K.-J."/>
        </authorList>
    </citation>
    <scope>STRUCTURE BY NMR OF 42-66</scope>
    <scope>DISULFIDE BONDS</scope>
</reference>